<sequence>MTKKKVKPGSNTIALNKRARHDYFIEEELEAGLSLQGWEVKSMRAGKANISDSYIIFRDGEAYLFGATIQPLTVASTHVVCDPTRTRKLLLNQRELASLFGKANRDGYTIVALSLYWKNAWAKIKIGLAKGKQQHDKRNDIKDREWKMQKERIMKNANRG</sequence>
<name>SSRP_MANSM</name>
<dbReference type="EMBL" id="AE016827">
    <property type="protein sequence ID" value="AAU38112.1"/>
    <property type="status" value="ALT_INIT"/>
    <property type="molecule type" value="Genomic_DNA"/>
</dbReference>
<dbReference type="RefSeq" id="WP_041639856.1">
    <property type="nucleotide sequence ID" value="NC_006300.1"/>
</dbReference>
<dbReference type="SMR" id="Q65SE8"/>
<dbReference type="STRING" id="221988.MS1505"/>
<dbReference type="KEGG" id="msu:MS1505"/>
<dbReference type="eggNOG" id="COG0691">
    <property type="taxonomic scope" value="Bacteria"/>
</dbReference>
<dbReference type="HOGENOM" id="CLU_108953_3_0_6"/>
<dbReference type="OrthoDB" id="9805462at2"/>
<dbReference type="Proteomes" id="UP000000607">
    <property type="component" value="Chromosome"/>
</dbReference>
<dbReference type="GO" id="GO:0005829">
    <property type="term" value="C:cytosol"/>
    <property type="evidence" value="ECO:0007669"/>
    <property type="project" value="TreeGrafter"/>
</dbReference>
<dbReference type="GO" id="GO:0003723">
    <property type="term" value="F:RNA binding"/>
    <property type="evidence" value="ECO:0007669"/>
    <property type="project" value="UniProtKB-UniRule"/>
</dbReference>
<dbReference type="GO" id="GO:0070929">
    <property type="term" value="P:trans-translation"/>
    <property type="evidence" value="ECO:0007669"/>
    <property type="project" value="UniProtKB-UniRule"/>
</dbReference>
<dbReference type="CDD" id="cd09294">
    <property type="entry name" value="SmpB"/>
    <property type="match status" value="1"/>
</dbReference>
<dbReference type="Gene3D" id="2.40.280.10">
    <property type="match status" value="1"/>
</dbReference>
<dbReference type="HAMAP" id="MF_00023">
    <property type="entry name" value="SmpB"/>
    <property type="match status" value="1"/>
</dbReference>
<dbReference type="InterPro" id="IPR023620">
    <property type="entry name" value="SmpB"/>
</dbReference>
<dbReference type="InterPro" id="IPR000037">
    <property type="entry name" value="SsrA-bd_prot"/>
</dbReference>
<dbReference type="InterPro" id="IPR020081">
    <property type="entry name" value="SsrA-bd_prot_CS"/>
</dbReference>
<dbReference type="NCBIfam" id="NF003843">
    <property type="entry name" value="PRK05422.1"/>
    <property type="match status" value="1"/>
</dbReference>
<dbReference type="NCBIfam" id="TIGR00086">
    <property type="entry name" value="smpB"/>
    <property type="match status" value="1"/>
</dbReference>
<dbReference type="PANTHER" id="PTHR30308:SF2">
    <property type="entry name" value="SSRA-BINDING PROTEIN"/>
    <property type="match status" value="1"/>
</dbReference>
<dbReference type="PANTHER" id="PTHR30308">
    <property type="entry name" value="TMRNA-BINDING COMPONENT OF TRANS-TRANSLATION TAGGING COMPLEX"/>
    <property type="match status" value="1"/>
</dbReference>
<dbReference type="Pfam" id="PF01668">
    <property type="entry name" value="SmpB"/>
    <property type="match status" value="1"/>
</dbReference>
<dbReference type="SUPFAM" id="SSF74982">
    <property type="entry name" value="Small protein B (SmpB)"/>
    <property type="match status" value="1"/>
</dbReference>
<dbReference type="PROSITE" id="PS01317">
    <property type="entry name" value="SSRP"/>
    <property type="match status" value="1"/>
</dbReference>
<reference key="1">
    <citation type="journal article" date="2004" name="Nat. Biotechnol.">
        <title>The genome sequence of the capnophilic rumen bacterium Mannheimia succiniciproducens.</title>
        <authorList>
            <person name="Hong S.H."/>
            <person name="Kim J.S."/>
            <person name="Lee S.Y."/>
            <person name="In Y.H."/>
            <person name="Choi S.S."/>
            <person name="Rih J.-K."/>
            <person name="Kim C.H."/>
            <person name="Jeong H."/>
            <person name="Hur C.G."/>
            <person name="Kim J.J."/>
        </authorList>
    </citation>
    <scope>NUCLEOTIDE SEQUENCE [LARGE SCALE GENOMIC DNA]</scope>
    <source>
        <strain>KCTC 0769BP / MBEL55E</strain>
    </source>
</reference>
<proteinExistence type="inferred from homology"/>
<accession>Q65SE8</accession>
<evidence type="ECO:0000255" key="1">
    <source>
        <dbReference type="HAMAP-Rule" id="MF_00023"/>
    </source>
</evidence>
<evidence type="ECO:0000305" key="2"/>
<feature type="chain" id="PRO_0000102976" description="SsrA-binding protein">
    <location>
        <begin position="1"/>
        <end position="160"/>
    </location>
</feature>
<organism>
    <name type="scientific">Mannheimia succiniciproducens (strain KCTC 0769BP / MBEL55E)</name>
    <dbReference type="NCBI Taxonomy" id="221988"/>
    <lineage>
        <taxon>Bacteria</taxon>
        <taxon>Pseudomonadati</taxon>
        <taxon>Pseudomonadota</taxon>
        <taxon>Gammaproteobacteria</taxon>
        <taxon>Pasteurellales</taxon>
        <taxon>Pasteurellaceae</taxon>
        <taxon>Basfia</taxon>
    </lineage>
</organism>
<keyword id="KW-0963">Cytoplasm</keyword>
<keyword id="KW-0694">RNA-binding</keyword>
<comment type="function">
    <text evidence="1">Required for rescue of stalled ribosomes mediated by trans-translation. Binds to transfer-messenger RNA (tmRNA), required for stable association of tmRNA with ribosomes. tmRNA and SmpB together mimic tRNA shape, replacing the anticodon stem-loop with SmpB. tmRNA is encoded by the ssrA gene; the 2 termini fold to resemble tRNA(Ala) and it encodes a 'tag peptide', a short internal open reading frame. During trans-translation Ala-aminoacylated tmRNA acts like a tRNA, entering the A-site of stalled ribosomes, displacing the stalled mRNA. The ribosome then switches to translate the ORF on the tmRNA; the nascent peptide is terminated with the 'tag peptide' encoded by the tmRNA and targeted for degradation. The ribosome is freed to recommence translation, which seems to be the essential function of trans-translation.</text>
</comment>
<comment type="subcellular location">
    <subcellularLocation>
        <location evidence="1">Cytoplasm</location>
    </subcellularLocation>
    <text evidence="1">The tmRNA-SmpB complex associates with stalled 70S ribosomes.</text>
</comment>
<comment type="similarity">
    <text evidence="1">Belongs to the SmpB family.</text>
</comment>
<comment type="sequence caution" evidence="2">
    <conflict type="erroneous initiation">
        <sequence resource="EMBL-CDS" id="AAU38112"/>
    </conflict>
    <text>Extended N-terminus.</text>
</comment>
<protein>
    <recommendedName>
        <fullName evidence="1">SsrA-binding protein</fullName>
    </recommendedName>
    <alternativeName>
        <fullName evidence="1">Small protein B</fullName>
    </alternativeName>
</protein>
<gene>
    <name evidence="1" type="primary">smpB</name>
    <name type="ordered locus">MS1505</name>
</gene>